<keyword id="KW-0966">Cell projection</keyword>
<keyword id="KW-0963">Cytoplasm</keyword>
<keyword id="KW-0206">Cytoskeleton</keyword>
<keyword id="KW-0967">Endosome</keyword>
<keyword id="KW-0440">LIM domain</keyword>
<keyword id="KW-0472">Membrane</keyword>
<keyword id="KW-0479">Metal-binding</keyword>
<keyword id="KW-0539">Nucleus</keyword>
<keyword id="KW-0597">Phosphoprotein</keyword>
<keyword id="KW-1185">Reference proteome</keyword>
<keyword id="KW-0770">Synapse</keyword>
<keyword id="KW-0771">Synaptosome</keyword>
<keyword id="KW-0862">Zinc</keyword>
<evidence type="ECO:0000250" key="1">
    <source>
        <dbReference type="UniProtKB" id="P36202"/>
    </source>
</evidence>
<evidence type="ECO:0000250" key="2">
    <source>
        <dbReference type="UniProtKB" id="P50479"/>
    </source>
</evidence>
<evidence type="ECO:0000250" key="3">
    <source>
        <dbReference type="UniProtKB" id="P70271"/>
    </source>
</evidence>
<evidence type="ECO:0000255" key="4">
    <source>
        <dbReference type="PROSITE-ProRule" id="PRU00125"/>
    </source>
</evidence>
<evidence type="ECO:0000255" key="5">
    <source>
        <dbReference type="PROSITE-ProRule" id="PRU00143"/>
    </source>
</evidence>
<evidence type="ECO:0000256" key="6">
    <source>
        <dbReference type="SAM" id="MobiDB-lite"/>
    </source>
</evidence>
<protein>
    <recommendedName>
        <fullName>PDZ and LIM domain protein 4</fullName>
    </recommendedName>
</protein>
<accession>Q3T005</accession>
<proteinExistence type="evidence at transcript level"/>
<organism>
    <name type="scientific">Bos taurus</name>
    <name type="common">Bovine</name>
    <dbReference type="NCBI Taxonomy" id="9913"/>
    <lineage>
        <taxon>Eukaryota</taxon>
        <taxon>Metazoa</taxon>
        <taxon>Chordata</taxon>
        <taxon>Craniata</taxon>
        <taxon>Vertebrata</taxon>
        <taxon>Euteleostomi</taxon>
        <taxon>Mammalia</taxon>
        <taxon>Eutheria</taxon>
        <taxon>Laurasiatheria</taxon>
        <taxon>Artiodactyla</taxon>
        <taxon>Ruminantia</taxon>
        <taxon>Pecora</taxon>
        <taxon>Bovidae</taxon>
        <taxon>Bovinae</taxon>
        <taxon>Bos</taxon>
    </lineage>
</organism>
<dbReference type="EMBL" id="BC102621">
    <property type="protein sequence ID" value="AAI02622.1"/>
    <property type="molecule type" value="mRNA"/>
</dbReference>
<dbReference type="RefSeq" id="NP_001029663.1">
    <property type="nucleotide sequence ID" value="NM_001034491.2"/>
</dbReference>
<dbReference type="SMR" id="Q3T005"/>
<dbReference type="FunCoup" id="Q3T005">
    <property type="interactions" value="145"/>
</dbReference>
<dbReference type="STRING" id="9913.ENSBTAP00000020501"/>
<dbReference type="PaxDb" id="9913-ENSBTAP00000055868"/>
<dbReference type="Ensembl" id="ENSBTAT00000020501.4">
    <property type="protein sequence ID" value="ENSBTAP00000020501.2"/>
    <property type="gene ID" value="ENSBTAG00000015426.6"/>
</dbReference>
<dbReference type="GeneID" id="515410"/>
<dbReference type="KEGG" id="bta:515410"/>
<dbReference type="CTD" id="8572"/>
<dbReference type="VEuPathDB" id="HostDB:ENSBTAG00000015426"/>
<dbReference type="VGNC" id="VGNC:32710">
    <property type="gene designation" value="PDLIM4"/>
</dbReference>
<dbReference type="eggNOG" id="KOG1703">
    <property type="taxonomic scope" value="Eukaryota"/>
</dbReference>
<dbReference type="GeneTree" id="ENSGT00940000159536"/>
<dbReference type="InParanoid" id="Q3T005"/>
<dbReference type="OMA" id="DNKQMLN"/>
<dbReference type="OrthoDB" id="420380at2759"/>
<dbReference type="Proteomes" id="UP000009136">
    <property type="component" value="Chromosome 7"/>
</dbReference>
<dbReference type="Bgee" id="ENSBTAG00000015426">
    <property type="expression patterns" value="Expressed in prostate gland and 103 other cell types or tissues"/>
</dbReference>
<dbReference type="GO" id="GO:0005912">
    <property type="term" value="C:adherens junction"/>
    <property type="evidence" value="ECO:0000318"/>
    <property type="project" value="GO_Central"/>
</dbReference>
<dbReference type="GO" id="GO:0005737">
    <property type="term" value="C:cytoplasm"/>
    <property type="evidence" value="ECO:0000250"/>
    <property type="project" value="UniProtKB"/>
</dbReference>
<dbReference type="GO" id="GO:0005856">
    <property type="term" value="C:cytoskeleton"/>
    <property type="evidence" value="ECO:0000250"/>
    <property type="project" value="UniProtKB"/>
</dbReference>
<dbReference type="GO" id="GO:0005829">
    <property type="term" value="C:cytosol"/>
    <property type="evidence" value="ECO:0007669"/>
    <property type="project" value="Ensembl"/>
</dbReference>
<dbReference type="GO" id="GO:0043197">
    <property type="term" value="C:dendritic spine"/>
    <property type="evidence" value="ECO:0000250"/>
    <property type="project" value="UniProtKB"/>
</dbReference>
<dbReference type="GO" id="GO:0031905">
    <property type="term" value="C:early endosome lumen"/>
    <property type="evidence" value="ECO:0000250"/>
    <property type="project" value="UniProtKB"/>
</dbReference>
<dbReference type="GO" id="GO:0031901">
    <property type="term" value="C:early endosome membrane"/>
    <property type="evidence" value="ECO:0007669"/>
    <property type="project" value="UniProtKB-SubCell"/>
</dbReference>
<dbReference type="GO" id="GO:0031941">
    <property type="term" value="C:filamentous actin"/>
    <property type="evidence" value="ECO:0000318"/>
    <property type="project" value="GO_Central"/>
</dbReference>
<dbReference type="GO" id="GO:0030027">
    <property type="term" value="C:lamellipodium"/>
    <property type="evidence" value="ECO:0000250"/>
    <property type="project" value="UniProtKB"/>
</dbReference>
<dbReference type="GO" id="GO:0005634">
    <property type="term" value="C:nucleus"/>
    <property type="evidence" value="ECO:0000250"/>
    <property type="project" value="UniProtKB"/>
</dbReference>
<dbReference type="GO" id="GO:0048471">
    <property type="term" value="C:perinuclear region of cytoplasm"/>
    <property type="evidence" value="ECO:0007669"/>
    <property type="project" value="UniProtKB-SubCell"/>
</dbReference>
<dbReference type="GO" id="GO:0045211">
    <property type="term" value="C:postsynaptic membrane"/>
    <property type="evidence" value="ECO:0000250"/>
    <property type="project" value="UniProtKB"/>
</dbReference>
<dbReference type="GO" id="GO:0034777">
    <property type="term" value="C:recycling endosome lumen"/>
    <property type="evidence" value="ECO:0000250"/>
    <property type="project" value="UniProtKB"/>
</dbReference>
<dbReference type="GO" id="GO:0055038">
    <property type="term" value="C:recycling endosome membrane"/>
    <property type="evidence" value="ECO:0007669"/>
    <property type="project" value="UniProtKB-SubCell"/>
</dbReference>
<dbReference type="GO" id="GO:0001725">
    <property type="term" value="C:stress fiber"/>
    <property type="evidence" value="ECO:0000250"/>
    <property type="project" value="UniProtKB"/>
</dbReference>
<dbReference type="GO" id="GO:0030018">
    <property type="term" value="C:Z disc"/>
    <property type="evidence" value="ECO:0000318"/>
    <property type="project" value="GO_Central"/>
</dbReference>
<dbReference type="GO" id="GO:0003779">
    <property type="term" value="F:actin binding"/>
    <property type="evidence" value="ECO:0000318"/>
    <property type="project" value="GO_Central"/>
</dbReference>
<dbReference type="GO" id="GO:0051393">
    <property type="term" value="F:alpha-actinin binding"/>
    <property type="evidence" value="ECO:0000250"/>
    <property type="project" value="UniProtKB"/>
</dbReference>
<dbReference type="GO" id="GO:0046872">
    <property type="term" value="F:metal ion binding"/>
    <property type="evidence" value="ECO:0007669"/>
    <property type="project" value="UniProtKB-KW"/>
</dbReference>
<dbReference type="GO" id="GO:0051371">
    <property type="term" value="F:muscle alpha-actinin binding"/>
    <property type="evidence" value="ECO:0000318"/>
    <property type="project" value="GO_Central"/>
</dbReference>
<dbReference type="GO" id="GO:0042803">
    <property type="term" value="F:protein homodimerization activity"/>
    <property type="evidence" value="ECO:0000250"/>
    <property type="project" value="UniProtKB"/>
</dbReference>
<dbReference type="GO" id="GO:0019903">
    <property type="term" value="F:protein phosphatase binding"/>
    <property type="evidence" value="ECO:0000250"/>
    <property type="project" value="UniProtKB"/>
</dbReference>
<dbReference type="GO" id="GO:0030036">
    <property type="term" value="P:actin cytoskeleton organization"/>
    <property type="evidence" value="ECO:0000250"/>
    <property type="project" value="UniProtKB"/>
</dbReference>
<dbReference type="GO" id="GO:0098976">
    <property type="term" value="P:excitatory chemical synaptic transmission"/>
    <property type="evidence" value="ECO:0000250"/>
    <property type="project" value="UniProtKB"/>
</dbReference>
<dbReference type="GO" id="GO:0007507">
    <property type="term" value="P:heart development"/>
    <property type="evidence" value="ECO:0000318"/>
    <property type="project" value="GO_Central"/>
</dbReference>
<dbReference type="GO" id="GO:0061061">
    <property type="term" value="P:muscle structure development"/>
    <property type="evidence" value="ECO:0000318"/>
    <property type="project" value="GO_Central"/>
</dbReference>
<dbReference type="CDD" id="cd06753">
    <property type="entry name" value="PDZ_PDLIM-like"/>
    <property type="match status" value="1"/>
</dbReference>
<dbReference type="FunFam" id="2.10.110.10:FF:000026">
    <property type="entry name" value="PDZ and LIM domain protein 3"/>
    <property type="match status" value="1"/>
</dbReference>
<dbReference type="FunFam" id="2.30.42.10:FF:000055">
    <property type="entry name" value="PDZ and LIM domain protein 3"/>
    <property type="match status" value="1"/>
</dbReference>
<dbReference type="Gene3D" id="2.30.42.10">
    <property type="match status" value="1"/>
</dbReference>
<dbReference type="Gene3D" id="2.10.110.10">
    <property type="entry name" value="Cysteine Rich Protein"/>
    <property type="match status" value="1"/>
</dbReference>
<dbReference type="InterPro" id="IPR031847">
    <property type="entry name" value="PDLI1-4/Zasp-like_mid"/>
</dbReference>
<dbReference type="InterPro" id="IPR001478">
    <property type="entry name" value="PDZ"/>
</dbReference>
<dbReference type="InterPro" id="IPR050604">
    <property type="entry name" value="PDZ-LIM_domain"/>
</dbReference>
<dbReference type="InterPro" id="IPR036034">
    <property type="entry name" value="PDZ_sf"/>
</dbReference>
<dbReference type="InterPro" id="IPR001781">
    <property type="entry name" value="Znf_LIM"/>
</dbReference>
<dbReference type="PANTHER" id="PTHR24214:SF6">
    <property type="entry name" value="PDZ AND LIM DOMAIN PROTEIN 4"/>
    <property type="match status" value="1"/>
</dbReference>
<dbReference type="PANTHER" id="PTHR24214">
    <property type="entry name" value="PDZ AND LIM DOMAIN PROTEIN ZASP"/>
    <property type="match status" value="1"/>
</dbReference>
<dbReference type="Pfam" id="PF15936">
    <property type="entry name" value="DUF4749"/>
    <property type="match status" value="1"/>
</dbReference>
<dbReference type="Pfam" id="PF00412">
    <property type="entry name" value="LIM"/>
    <property type="match status" value="1"/>
</dbReference>
<dbReference type="Pfam" id="PF00595">
    <property type="entry name" value="PDZ"/>
    <property type="match status" value="1"/>
</dbReference>
<dbReference type="SMART" id="SM00132">
    <property type="entry name" value="LIM"/>
    <property type="match status" value="1"/>
</dbReference>
<dbReference type="SMART" id="SM00228">
    <property type="entry name" value="PDZ"/>
    <property type="match status" value="1"/>
</dbReference>
<dbReference type="SUPFAM" id="SSF57716">
    <property type="entry name" value="Glucocorticoid receptor-like (DNA-binding domain)"/>
    <property type="match status" value="2"/>
</dbReference>
<dbReference type="SUPFAM" id="SSF50156">
    <property type="entry name" value="PDZ domain-like"/>
    <property type="match status" value="1"/>
</dbReference>
<dbReference type="PROSITE" id="PS00478">
    <property type="entry name" value="LIM_DOMAIN_1"/>
    <property type="match status" value="1"/>
</dbReference>
<dbReference type="PROSITE" id="PS50023">
    <property type="entry name" value="LIM_DOMAIN_2"/>
    <property type="match status" value="1"/>
</dbReference>
<dbReference type="PROSITE" id="PS50106">
    <property type="entry name" value="PDZ"/>
    <property type="match status" value="1"/>
</dbReference>
<sequence length="331" mass="35425">MPHSVTLRGPSPWGFRLVGGRDFSVPLTISRVHAGSKAALAALCPGDLIQAINGESTELMTHLEAQNRIKGCRDHLTLSVSRPEGRSWPSTPEDNKAQAHRIHIDSEAQDGSPLTSRRPSATGLGPEDGRPGLGSPYGQSPRLPVPHNGSNSEATLLAQMGALHVSPPHSTDPARGLPRSRDCGVDLGSEVYRMLREPAEPAAAEPKQSGSFRYLQGMLEAGEGGERPGPGGPRNLKPTASKLGAPLSGLQGLPECTRCGHGIVGTIVKARDKLYHPECFMCSDCGLNLKQRGYFFLDERLYCESHAKARVKPPEGYDVVAVYPNAKVELV</sequence>
<name>PDLI4_BOVIN</name>
<gene>
    <name type="primary">PDLIM4</name>
</gene>
<reference key="1">
    <citation type="submission" date="2005-08" db="EMBL/GenBank/DDBJ databases">
        <authorList>
            <consortium name="NIH - Mammalian Gene Collection (MGC) project"/>
        </authorList>
    </citation>
    <scope>NUCLEOTIDE SEQUENCE [LARGE SCALE MRNA]</scope>
    <source>
        <strain>Hereford</strain>
        <tissue>Testis</tissue>
    </source>
</reference>
<feature type="chain" id="PRO_0000284656" description="PDZ and LIM domain protein 4">
    <location>
        <begin position="1"/>
        <end position="331"/>
    </location>
</feature>
<feature type="domain" description="PDZ" evidence="5">
    <location>
        <begin position="1"/>
        <end position="84"/>
    </location>
</feature>
<feature type="domain" description="LIM zinc-binding" evidence="4">
    <location>
        <begin position="254"/>
        <end position="313"/>
    </location>
</feature>
<feature type="region of interest" description="Disordered" evidence="6">
    <location>
        <begin position="80"/>
        <end position="99"/>
    </location>
</feature>
<feature type="region of interest" description="Disordered" evidence="6">
    <location>
        <begin position="105"/>
        <end position="152"/>
    </location>
</feature>
<feature type="region of interest" description="Disordered" evidence="6">
    <location>
        <begin position="221"/>
        <end position="243"/>
    </location>
</feature>
<feature type="modified residue" description="Phosphoserine" evidence="2">
    <location>
        <position position="112"/>
    </location>
</feature>
<feature type="modified residue" description="Phosphoserine" evidence="3">
    <location>
        <position position="116"/>
    </location>
</feature>
<feature type="modified residue" description="Phosphoserine" evidence="3">
    <location>
        <position position="120"/>
    </location>
</feature>
<feature type="modified residue" description="Phosphoserine" evidence="1">
    <location>
        <position position="135"/>
    </location>
</feature>
<comment type="function">
    <text evidence="1 2">Suppresses SRC activation by recognizing and binding to active SRC and facilitating PTPN13-mediated dephosphorylation of SRC 'Tyr-419' leading to its inactivation. Inactivated SRC dissociates from this protein allowing the initiation of a new SRC inactivation cycle. Involved in reorganization of the actin cytoskeleton (By similarity). In nonmuscle cells, binds to ACTN1 (alpha-actinin-1), increases the affinity of ACTN1 to F-actin (filamentous actin), and promotes formation of actin stress fibers. Involved in regulation of the synaptic AMPA receptor transport in dendritic spines of hippocampal pyramidal neurons directing the receptors toward an insertion at the postsynaptic membrane. Links endosomal surface-internalized GRIA1-containing AMPA receptors to the alpha-actinin/actin cytoskeleton. Increases AMPA receptor-mediated excitatory postsynaptic currents in neurons (By similarity).</text>
</comment>
<comment type="subunit">
    <text evidence="1 3">Homodimer (By similarity). Interacts (via C-terminus only or via combined C-terminus and LIM domain, but not LIM domain only) with PTPN13 (via the second or fourth PDZ domains). Found in a complex with PTPN13 and TRIP6 (By similarity). Interacts (via PDZ domain) with ACTN1 and ACTN2 (via C-terminal SDL residues) (By similarity). Interacts (via PDZ domain) with TRIP6 (via the second LIM domain or via the third LIM domain plus C-terminus) (By similarity). Interacts (via LIM domain) with GRIA1 (via C-terminus); this interaction as well as the interaction with alpha-actinin is required for their colocalization in early endosomes. Interacts with PDLIM1 (By similarity). Forms (via LIM domain) a heterodimer with PDLIM3 (By similarity). Interacts directly with SRC (via kinase domain and to a lesser extent the SH2 domain) (By similarity).</text>
</comment>
<comment type="subcellular location">
    <subcellularLocation>
        <location evidence="1">Cytoplasm</location>
        <location evidence="1">Cytoskeleton</location>
    </subcellularLocation>
    <subcellularLocation>
        <location evidence="1">Cell projection</location>
        <location evidence="1">Dendritic spine</location>
    </subcellularLocation>
    <subcellularLocation>
        <location evidence="1">Early endosome membrane</location>
        <topology evidence="1">Peripheral membrane protein</topology>
        <orientation evidence="1">Cytoplasmic side</orientation>
    </subcellularLocation>
    <subcellularLocation>
        <location evidence="1">Recycling endosome membrane</location>
        <topology>Peripheral membrane protein</topology>
        <orientation evidence="1">Cytoplasmic side</orientation>
    </subcellularLocation>
    <subcellularLocation>
        <location evidence="2">Nucleus</location>
    </subcellularLocation>
    <subcellularLocation>
        <location evidence="2">Cytoplasm</location>
        <location evidence="2">Perinuclear region</location>
    </subcellularLocation>
    <subcellularLocation>
        <location evidence="2">Cell projection</location>
        <location evidence="2">Lamellipodium</location>
    </subcellularLocation>
    <subcellularLocation>
        <location evidence="1">Synapse</location>
        <location evidence="1">Synaptosome</location>
    </subcellularLocation>
    <text evidence="1 2">Localizes to actin stress fibers in nonmuscle cells. Colocalizes with GRIA1 in early endosomes. Enriched in numerous but not all spine-like structures along dendritic branches. Colocalizes with actin and enriched at sites containing larger amounts of actin and alpha-actinin. Targeted efficiently to spines via its PDZ domain-mediated interaction with the alpha-actinin/actin cytoskeletal complex. Localizes to synaptosomes in brain (By similarity). Colocalizes with F-actin. Colocalizes with TRIP6 at cell-cell contacts and lamellipodia. In the cytoplasm, displays a fibrillar pattern with characteristic thick fibers and occasional clusters. Colocalizes with the actin stress fibers. Oxidative stress induces redistribution from cytoskeleton to cytosol. Colocalizes with SRC at the perinuclear region, but not at focal adhesions (By similarity).</text>
</comment>
<comment type="PTM">
    <text evidence="3">Phosphorylated on tyrosine residue(s). Can be dephosphorylated by PTPN13 (By similarity).</text>
</comment>